<protein>
    <recommendedName>
        <fullName evidence="1">Glutamyl-tRNA(Gln) amidotransferase subunit A</fullName>
        <shortName evidence="1">Glu-ADT subunit A</shortName>
        <ecNumber evidence="1">6.3.5.7</ecNumber>
    </recommendedName>
</protein>
<comment type="function">
    <text evidence="1">Allows the formation of correctly charged Gln-tRNA(Gln) through the transamidation of misacylated Glu-tRNA(Gln) in organisms which lack glutaminyl-tRNA synthetase. The reaction takes place in the presence of glutamine and ATP through an activated gamma-phospho-Glu-tRNA(Gln).</text>
</comment>
<comment type="catalytic activity">
    <reaction evidence="1">
        <text>L-glutamyl-tRNA(Gln) + L-glutamine + ATP + H2O = L-glutaminyl-tRNA(Gln) + L-glutamate + ADP + phosphate + H(+)</text>
        <dbReference type="Rhea" id="RHEA:17521"/>
        <dbReference type="Rhea" id="RHEA-COMP:9681"/>
        <dbReference type="Rhea" id="RHEA-COMP:9684"/>
        <dbReference type="ChEBI" id="CHEBI:15377"/>
        <dbReference type="ChEBI" id="CHEBI:15378"/>
        <dbReference type="ChEBI" id="CHEBI:29985"/>
        <dbReference type="ChEBI" id="CHEBI:30616"/>
        <dbReference type="ChEBI" id="CHEBI:43474"/>
        <dbReference type="ChEBI" id="CHEBI:58359"/>
        <dbReference type="ChEBI" id="CHEBI:78520"/>
        <dbReference type="ChEBI" id="CHEBI:78521"/>
        <dbReference type="ChEBI" id="CHEBI:456216"/>
        <dbReference type="EC" id="6.3.5.7"/>
    </reaction>
</comment>
<comment type="subunit">
    <text evidence="1">Heterotrimer of A, B and C subunits.</text>
</comment>
<comment type="similarity">
    <text evidence="1">Belongs to the amidase family. GatA subfamily.</text>
</comment>
<proteinExistence type="inferred from homology"/>
<reference key="1">
    <citation type="submission" date="2007-06" db="EMBL/GenBank/DDBJ databases">
        <title>Complete sequence of Marinomonas sp. MWYL1.</title>
        <authorList>
            <consortium name="US DOE Joint Genome Institute"/>
            <person name="Copeland A."/>
            <person name="Lucas S."/>
            <person name="Lapidus A."/>
            <person name="Barry K."/>
            <person name="Glavina del Rio T."/>
            <person name="Dalin E."/>
            <person name="Tice H."/>
            <person name="Pitluck S."/>
            <person name="Kiss H."/>
            <person name="Brettin T."/>
            <person name="Bruce D."/>
            <person name="Detter J.C."/>
            <person name="Han C."/>
            <person name="Schmutz J."/>
            <person name="Larimer F."/>
            <person name="Land M."/>
            <person name="Hauser L."/>
            <person name="Kyrpides N."/>
            <person name="Kim E."/>
            <person name="Johnston A.W.B."/>
            <person name="Todd J.D."/>
            <person name="Rogers R."/>
            <person name="Wexler M."/>
            <person name="Bond P.L."/>
            <person name="Li Y."/>
            <person name="Richardson P."/>
        </authorList>
    </citation>
    <scope>NUCLEOTIDE SEQUENCE [LARGE SCALE GENOMIC DNA]</scope>
    <source>
        <strain>MWYL1</strain>
    </source>
</reference>
<feature type="chain" id="PRO_1000076133" description="Glutamyl-tRNA(Gln) amidotransferase subunit A">
    <location>
        <begin position="1"/>
        <end position="486"/>
    </location>
</feature>
<feature type="active site" description="Charge relay system" evidence="1">
    <location>
        <position position="76"/>
    </location>
</feature>
<feature type="active site" description="Charge relay system" evidence="1">
    <location>
        <position position="151"/>
    </location>
</feature>
<feature type="active site" description="Acyl-ester intermediate" evidence="1">
    <location>
        <position position="175"/>
    </location>
</feature>
<name>GATA_MARMS</name>
<accession>A6VWN0</accession>
<gene>
    <name evidence="1" type="primary">gatA</name>
    <name type="ordered locus">Mmwyl1_1935</name>
</gene>
<evidence type="ECO:0000255" key="1">
    <source>
        <dbReference type="HAMAP-Rule" id="MF_00120"/>
    </source>
</evidence>
<organism>
    <name type="scientific">Marinomonas sp. (strain MWYL1)</name>
    <dbReference type="NCBI Taxonomy" id="400668"/>
    <lineage>
        <taxon>Bacteria</taxon>
        <taxon>Pseudomonadati</taxon>
        <taxon>Pseudomonadota</taxon>
        <taxon>Gammaproteobacteria</taxon>
        <taxon>Oceanospirillales</taxon>
        <taxon>Oceanospirillaceae</taxon>
        <taxon>Marinomonas</taxon>
    </lineage>
</organism>
<sequence length="486" mass="52027">MFEQSISTLAQKLRNKDISSVELTRLFLARIAKLDPQLNSFITVSEQHALEQAAAADVLLQSGKGTSLTGIPVAHKDLFCTEGTLTTCGSKMLHNFVPPYESTVTSRIQQAGAVMLGKTNMDEFAMGSSNENSFYGAVKNPWNLDMVPGGSSGGSAAAIAAGLAVAATGTDTGGSIRQPASFCGITGLKPTYGRVSRFGMIAYASSLDQGGPMAKSAEDCAHLMQAMAGFDEKDSTSADKPADDYLANLNSPLTGLKIGLPKEYFGEGLDSKVADVIMAAVKEFEKLGATVKEISLPNLQLSIPSYYVIAPSEASSNLSRFDGVRFGHRCDDPKDLLDMYTRSRAEGFGTEVQKRIMVGTYALSEGYYDAYYLKAQKIRRLIKEDFVKALEEVDVIMGPVAPTTAFGLGSKTSDPVAMYLEDIYTLSVNLAGIPAMSVPAGFADGMPVGLQVMGNYFAEAKLLNIAHQYQQHTDWHLQTPTMAKGA</sequence>
<keyword id="KW-0067">ATP-binding</keyword>
<keyword id="KW-0436">Ligase</keyword>
<keyword id="KW-0547">Nucleotide-binding</keyword>
<keyword id="KW-0648">Protein biosynthesis</keyword>
<dbReference type="EC" id="6.3.5.7" evidence="1"/>
<dbReference type="EMBL" id="CP000749">
    <property type="protein sequence ID" value="ABR70859.1"/>
    <property type="molecule type" value="Genomic_DNA"/>
</dbReference>
<dbReference type="SMR" id="A6VWN0"/>
<dbReference type="STRING" id="400668.Mmwyl1_1935"/>
<dbReference type="KEGG" id="mmw:Mmwyl1_1935"/>
<dbReference type="eggNOG" id="COG0154">
    <property type="taxonomic scope" value="Bacteria"/>
</dbReference>
<dbReference type="HOGENOM" id="CLU_009600_0_3_6"/>
<dbReference type="OrthoDB" id="8872210at2"/>
<dbReference type="GO" id="GO:0030956">
    <property type="term" value="C:glutamyl-tRNA(Gln) amidotransferase complex"/>
    <property type="evidence" value="ECO:0007669"/>
    <property type="project" value="InterPro"/>
</dbReference>
<dbReference type="GO" id="GO:0005524">
    <property type="term" value="F:ATP binding"/>
    <property type="evidence" value="ECO:0007669"/>
    <property type="project" value="UniProtKB-KW"/>
</dbReference>
<dbReference type="GO" id="GO:0050567">
    <property type="term" value="F:glutaminyl-tRNA synthase (glutamine-hydrolyzing) activity"/>
    <property type="evidence" value="ECO:0007669"/>
    <property type="project" value="UniProtKB-UniRule"/>
</dbReference>
<dbReference type="GO" id="GO:0006412">
    <property type="term" value="P:translation"/>
    <property type="evidence" value="ECO:0007669"/>
    <property type="project" value="UniProtKB-UniRule"/>
</dbReference>
<dbReference type="Gene3D" id="3.90.1300.10">
    <property type="entry name" value="Amidase signature (AS) domain"/>
    <property type="match status" value="1"/>
</dbReference>
<dbReference type="HAMAP" id="MF_00120">
    <property type="entry name" value="GatA"/>
    <property type="match status" value="1"/>
</dbReference>
<dbReference type="InterPro" id="IPR000120">
    <property type="entry name" value="Amidase"/>
</dbReference>
<dbReference type="InterPro" id="IPR020556">
    <property type="entry name" value="Amidase_CS"/>
</dbReference>
<dbReference type="InterPro" id="IPR023631">
    <property type="entry name" value="Amidase_dom"/>
</dbReference>
<dbReference type="InterPro" id="IPR036928">
    <property type="entry name" value="AS_sf"/>
</dbReference>
<dbReference type="InterPro" id="IPR004412">
    <property type="entry name" value="GatA"/>
</dbReference>
<dbReference type="NCBIfam" id="TIGR00132">
    <property type="entry name" value="gatA"/>
    <property type="match status" value="1"/>
</dbReference>
<dbReference type="PANTHER" id="PTHR11895:SF151">
    <property type="entry name" value="GLUTAMYL-TRNA(GLN) AMIDOTRANSFERASE SUBUNIT A"/>
    <property type="match status" value="1"/>
</dbReference>
<dbReference type="PANTHER" id="PTHR11895">
    <property type="entry name" value="TRANSAMIDASE"/>
    <property type="match status" value="1"/>
</dbReference>
<dbReference type="Pfam" id="PF01425">
    <property type="entry name" value="Amidase"/>
    <property type="match status" value="1"/>
</dbReference>
<dbReference type="SUPFAM" id="SSF75304">
    <property type="entry name" value="Amidase signature (AS) enzymes"/>
    <property type="match status" value="1"/>
</dbReference>
<dbReference type="PROSITE" id="PS00571">
    <property type="entry name" value="AMIDASES"/>
    <property type="match status" value="1"/>
</dbReference>